<dbReference type="EC" id="6.1.1.14" evidence="1"/>
<dbReference type="EMBL" id="AE005672">
    <property type="protein sequence ID" value="AAK75569.1"/>
    <property type="molecule type" value="Genomic_DNA"/>
</dbReference>
<dbReference type="PIR" id="H95171">
    <property type="entry name" value="H95171"/>
</dbReference>
<dbReference type="RefSeq" id="WP_000038726.1">
    <property type="nucleotide sequence ID" value="NZ_CP155539.1"/>
</dbReference>
<dbReference type="SMR" id="Q97PW5"/>
<dbReference type="PaxDb" id="170187-SP_1475"/>
<dbReference type="EnsemblBacteria" id="AAK75569">
    <property type="protein sequence ID" value="AAK75569"/>
    <property type="gene ID" value="SP_1475"/>
</dbReference>
<dbReference type="KEGG" id="spn:SP_1475"/>
<dbReference type="eggNOG" id="COG0752">
    <property type="taxonomic scope" value="Bacteria"/>
</dbReference>
<dbReference type="PhylomeDB" id="Q97PW5"/>
<dbReference type="BioCyc" id="SPNE170187:G1FZB-1491-MONOMER"/>
<dbReference type="Proteomes" id="UP000000585">
    <property type="component" value="Chromosome"/>
</dbReference>
<dbReference type="GO" id="GO:0005829">
    <property type="term" value="C:cytosol"/>
    <property type="evidence" value="ECO:0007669"/>
    <property type="project" value="TreeGrafter"/>
</dbReference>
<dbReference type="GO" id="GO:0005524">
    <property type="term" value="F:ATP binding"/>
    <property type="evidence" value="ECO:0007669"/>
    <property type="project" value="UniProtKB-UniRule"/>
</dbReference>
<dbReference type="GO" id="GO:0140096">
    <property type="term" value="F:catalytic activity, acting on a protein"/>
    <property type="evidence" value="ECO:0007669"/>
    <property type="project" value="UniProtKB-ARBA"/>
</dbReference>
<dbReference type="GO" id="GO:0004820">
    <property type="term" value="F:glycine-tRNA ligase activity"/>
    <property type="evidence" value="ECO:0007669"/>
    <property type="project" value="UniProtKB-UniRule"/>
</dbReference>
<dbReference type="GO" id="GO:0016740">
    <property type="term" value="F:transferase activity"/>
    <property type="evidence" value="ECO:0007669"/>
    <property type="project" value="UniProtKB-ARBA"/>
</dbReference>
<dbReference type="GO" id="GO:0006426">
    <property type="term" value="P:glycyl-tRNA aminoacylation"/>
    <property type="evidence" value="ECO:0007669"/>
    <property type="project" value="UniProtKB-UniRule"/>
</dbReference>
<dbReference type="CDD" id="cd00733">
    <property type="entry name" value="GlyRS_alpha_core"/>
    <property type="match status" value="1"/>
</dbReference>
<dbReference type="FunFam" id="3.30.930.10:FF:000006">
    <property type="entry name" value="Glycine--tRNA ligase alpha subunit"/>
    <property type="match status" value="1"/>
</dbReference>
<dbReference type="Gene3D" id="3.30.930.10">
    <property type="entry name" value="Bira Bifunctional Protein, Domain 2"/>
    <property type="match status" value="1"/>
</dbReference>
<dbReference type="Gene3D" id="1.20.58.180">
    <property type="entry name" value="Class II aaRS and biotin synthetases, domain 2"/>
    <property type="match status" value="1"/>
</dbReference>
<dbReference type="HAMAP" id="MF_00254">
    <property type="entry name" value="Gly_tRNA_synth_alpha"/>
    <property type="match status" value="1"/>
</dbReference>
<dbReference type="InterPro" id="IPR045864">
    <property type="entry name" value="aa-tRNA-synth_II/BPL/LPL"/>
</dbReference>
<dbReference type="InterPro" id="IPR006194">
    <property type="entry name" value="Gly-tRNA-synth_heterodimer"/>
</dbReference>
<dbReference type="InterPro" id="IPR002310">
    <property type="entry name" value="Gly-tRNA_ligase_asu"/>
</dbReference>
<dbReference type="NCBIfam" id="TIGR00388">
    <property type="entry name" value="glyQ"/>
    <property type="match status" value="1"/>
</dbReference>
<dbReference type="NCBIfam" id="NF006827">
    <property type="entry name" value="PRK09348.1"/>
    <property type="match status" value="1"/>
</dbReference>
<dbReference type="PANTHER" id="PTHR30075:SF2">
    <property type="entry name" value="GLYCINE--TRNA LIGASE, CHLOROPLASTIC_MITOCHONDRIAL 2"/>
    <property type="match status" value="1"/>
</dbReference>
<dbReference type="PANTHER" id="PTHR30075">
    <property type="entry name" value="GLYCYL-TRNA SYNTHETASE"/>
    <property type="match status" value="1"/>
</dbReference>
<dbReference type="Pfam" id="PF02091">
    <property type="entry name" value="tRNA-synt_2e"/>
    <property type="match status" value="1"/>
</dbReference>
<dbReference type="PRINTS" id="PR01044">
    <property type="entry name" value="TRNASYNTHGA"/>
</dbReference>
<dbReference type="SUPFAM" id="SSF55681">
    <property type="entry name" value="Class II aaRS and biotin synthetases"/>
    <property type="match status" value="1"/>
</dbReference>
<dbReference type="PROSITE" id="PS50861">
    <property type="entry name" value="AA_TRNA_LIGASE_II_GLYAB"/>
    <property type="match status" value="1"/>
</dbReference>
<comment type="catalytic activity">
    <reaction evidence="1">
        <text>tRNA(Gly) + glycine + ATP = glycyl-tRNA(Gly) + AMP + diphosphate</text>
        <dbReference type="Rhea" id="RHEA:16013"/>
        <dbReference type="Rhea" id="RHEA-COMP:9664"/>
        <dbReference type="Rhea" id="RHEA-COMP:9683"/>
        <dbReference type="ChEBI" id="CHEBI:30616"/>
        <dbReference type="ChEBI" id="CHEBI:33019"/>
        <dbReference type="ChEBI" id="CHEBI:57305"/>
        <dbReference type="ChEBI" id="CHEBI:78442"/>
        <dbReference type="ChEBI" id="CHEBI:78522"/>
        <dbReference type="ChEBI" id="CHEBI:456215"/>
        <dbReference type="EC" id="6.1.1.14"/>
    </reaction>
</comment>
<comment type="subunit">
    <text evidence="1">Tetramer of two alpha and two beta subunits.</text>
</comment>
<comment type="subcellular location">
    <subcellularLocation>
        <location evidence="1">Cytoplasm</location>
    </subcellularLocation>
</comment>
<comment type="similarity">
    <text evidence="1">Belongs to the class-II aminoacyl-tRNA synthetase family.</text>
</comment>
<feature type="chain" id="PRO_0000072869" description="Glycine--tRNA ligase alpha subunit">
    <location>
        <begin position="1"/>
        <end position="305"/>
    </location>
</feature>
<keyword id="KW-0030">Aminoacyl-tRNA synthetase</keyword>
<keyword id="KW-0067">ATP-binding</keyword>
<keyword id="KW-0963">Cytoplasm</keyword>
<keyword id="KW-0436">Ligase</keyword>
<keyword id="KW-0547">Nucleotide-binding</keyword>
<keyword id="KW-0648">Protein biosynthesis</keyword>
<keyword id="KW-1185">Reference proteome</keyword>
<name>SYGA_STRPN</name>
<sequence>MSKKLTFQEIILTLQQFWNDQDCMLMQAYDNEKGAGTMSPYTFLRAIGPEPWNAAYVEPSRRPADGRYGENPNRLYQHHQFQVVMKPSPSNIQELYLESLEKLGINPLEHDIRFVEDNWENPSTGSAGLGWEVWLDGMEITQFTYFQQVGGLATGPVTAEVTYGLERLASYIQEVDSVYDIEWADGVKYGEIFIQPEYEHSKYSFEISDQEMLLENFDKFEKEAGRALEEGLVHPAYDYVLKCSHTFNLLDARGAVSVTERAGYIARIRNLARVVAKTFVAERKRLGYPLLDEETRAKLLAEDAE</sequence>
<evidence type="ECO:0000255" key="1">
    <source>
        <dbReference type="HAMAP-Rule" id="MF_00254"/>
    </source>
</evidence>
<reference key="1">
    <citation type="journal article" date="2001" name="Science">
        <title>Complete genome sequence of a virulent isolate of Streptococcus pneumoniae.</title>
        <authorList>
            <person name="Tettelin H."/>
            <person name="Nelson K.E."/>
            <person name="Paulsen I.T."/>
            <person name="Eisen J.A."/>
            <person name="Read T.D."/>
            <person name="Peterson S.N."/>
            <person name="Heidelberg J.F."/>
            <person name="DeBoy R.T."/>
            <person name="Haft D.H."/>
            <person name="Dodson R.J."/>
            <person name="Durkin A.S."/>
            <person name="Gwinn M.L."/>
            <person name="Kolonay J.F."/>
            <person name="Nelson W.C."/>
            <person name="Peterson J.D."/>
            <person name="Umayam L.A."/>
            <person name="White O."/>
            <person name="Salzberg S.L."/>
            <person name="Lewis M.R."/>
            <person name="Radune D."/>
            <person name="Holtzapple E.K."/>
            <person name="Khouri H.M."/>
            <person name="Wolf A.M."/>
            <person name="Utterback T.R."/>
            <person name="Hansen C.L."/>
            <person name="McDonald L.A."/>
            <person name="Feldblyum T.V."/>
            <person name="Angiuoli S.V."/>
            <person name="Dickinson T."/>
            <person name="Hickey E.K."/>
            <person name="Holt I.E."/>
            <person name="Loftus B.J."/>
            <person name="Yang F."/>
            <person name="Smith H.O."/>
            <person name="Venter J.C."/>
            <person name="Dougherty B.A."/>
            <person name="Morrison D.A."/>
            <person name="Hollingshead S.K."/>
            <person name="Fraser C.M."/>
        </authorList>
    </citation>
    <scope>NUCLEOTIDE SEQUENCE [LARGE SCALE GENOMIC DNA]</scope>
    <source>
        <strain>ATCC BAA-334 / TIGR4</strain>
    </source>
</reference>
<organism>
    <name type="scientific">Streptococcus pneumoniae serotype 4 (strain ATCC BAA-334 / TIGR4)</name>
    <dbReference type="NCBI Taxonomy" id="170187"/>
    <lineage>
        <taxon>Bacteria</taxon>
        <taxon>Bacillati</taxon>
        <taxon>Bacillota</taxon>
        <taxon>Bacilli</taxon>
        <taxon>Lactobacillales</taxon>
        <taxon>Streptococcaceae</taxon>
        <taxon>Streptococcus</taxon>
    </lineage>
</organism>
<gene>
    <name evidence="1" type="primary">glyQ</name>
    <name type="ordered locus">SP_1475</name>
</gene>
<proteinExistence type="inferred from homology"/>
<accession>Q97PW5</accession>
<protein>
    <recommendedName>
        <fullName evidence="1">Glycine--tRNA ligase alpha subunit</fullName>
        <ecNumber evidence="1">6.1.1.14</ecNumber>
    </recommendedName>
    <alternativeName>
        <fullName evidence="1">Glycyl-tRNA synthetase alpha subunit</fullName>
        <shortName evidence="1">GlyRS</shortName>
    </alternativeName>
</protein>